<protein>
    <recommendedName>
        <fullName evidence="1">Exodeoxyribonuclease 7 small subunit</fullName>
        <ecNumber evidence="1">3.1.11.6</ecNumber>
    </recommendedName>
    <alternativeName>
        <fullName evidence="1">Exodeoxyribonuclease VII small subunit</fullName>
        <shortName evidence="1">Exonuclease VII small subunit</shortName>
    </alternativeName>
</protein>
<keyword id="KW-0963">Cytoplasm</keyword>
<keyword id="KW-0269">Exonuclease</keyword>
<keyword id="KW-0378">Hydrolase</keyword>
<keyword id="KW-0540">Nuclease</keyword>
<gene>
    <name evidence="1" type="primary">xseB</name>
    <name type="ordered locus">BCE33L3932</name>
</gene>
<proteinExistence type="inferred from homology"/>
<comment type="function">
    <text evidence="1">Bidirectionally degrades single-stranded DNA into large acid-insoluble oligonucleotides, which are then degraded further into small acid-soluble oligonucleotides.</text>
</comment>
<comment type="catalytic activity">
    <reaction evidence="1">
        <text>Exonucleolytic cleavage in either 5'- to 3'- or 3'- to 5'-direction to yield nucleoside 5'-phosphates.</text>
        <dbReference type="EC" id="3.1.11.6"/>
    </reaction>
</comment>
<comment type="subunit">
    <text evidence="1">Heterooligomer composed of large and small subunits.</text>
</comment>
<comment type="subcellular location">
    <subcellularLocation>
        <location evidence="1">Cytoplasm</location>
    </subcellularLocation>
</comment>
<comment type="similarity">
    <text evidence="1">Belongs to the XseB family.</text>
</comment>
<accession>Q635A5</accession>
<feature type="chain" id="PRO_0000206916" description="Exodeoxyribonuclease 7 small subunit">
    <location>
        <begin position="1"/>
        <end position="76"/>
    </location>
</feature>
<evidence type="ECO:0000255" key="1">
    <source>
        <dbReference type="HAMAP-Rule" id="MF_00337"/>
    </source>
</evidence>
<organism>
    <name type="scientific">Bacillus cereus (strain ZK / E33L)</name>
    <dbReference type="NCBI Taxonomy" id="288681"/>
    <lineage>
        <taxon>Bacteria</taxon>
        <taxon>Bacillati</taxon>
        <taxon>Bacillota</taxon>
        <taxon>Bacilli</taxon>
        <taxon>Bacillales</taxon>
        <taxon>Bacillaceae</taxon>
        <taxon>Bacillus</taxon>
        <taxon>Bacillus cereus group</taxon>
    </lineage>
</organism>
<name>EX7S_BACCZ</name>
<sequence length="76" mass="8516">MENKLSFEEAISQLEHLVSKLEQGDVPLEEAISYFKEGMELSKLCDEKLKNVQEQMAVILGEDGELEPFTALGDEA</sequence>
<reference key="1">
    <citation type="journal article" date="2006" name="J. Bacteriol.">
        <title>Pathogenomic sequence analysis of Bacillus cereus and Bacillus thuringiensis isolates closely related to Bacillus anthracis.</title>
        <authorList>
            <person name="Han C.S."/>
            <person name="Xie G."/>
            <person name="Challacombe J.F."/>
            <person name="Altherr M.R."/>
            <person name="Bhotika S.S."/>
            <person name="Bruce D."/>
            <person name="Campbell C.S."/>
            <person name="Campbell M.L."/>
            <person name="Chen J."/>
            <person name="Chertkov O."/>
            <person name="Cleland C."/>
            <person name="Dimitrijevic M."/>
            <person name="Doggett N.A."/>
            <person name="Fawcett J.J."/>
            <person name="Glavina T."/>
            <person name="Goodwin L.A."/>
            <person name="Hill K.K."/>
            <person name="Hitchcock P."/>
            <person name="Jackson P.J."/>
            <person name="Keim P."/>
            <person name="Kewalramani A.R."/>
            <person name="Longmire J."/>
            <person name="Lucas S."/>
            <person name="Malfatti S."/>
            <person name="McMurry K."/>
            <person name="Meincke L.J."/>
            <person name="Misra M."/>
            <person name="Moseman B.L."/>
            <person name="Mundt M."/>
            <person name="Munk A.C."/>
            <person name="Okinaka R.T."/>
            <person name="Parson-Quintana B."/>
            <person name="Reilly L.P."/>
            <person name="Richardson P."/>
            <person name="Robinson D.L."/>
            <person name="Rubin E."/>
            <person name="Saunders E."/>
            <person name="Tapia R."/>
            <person name="Tesmer J.G."/>
            <person name="Thayer N."/>
            <person name="Thompson L.S."/>
            <person name="Tice H."/>
            <person name="Ticknor L.O."/>
            <person name="Wills P.L."/>
            <person name="Brettin T.S."/>
            <person name="Gilna P."/>
        </authorList>
    </citation>
    <scope>NUCLEOTIDE SEQUENCE [LARGE SCALE GENOMIC DNA]</scope>
    <source>
        <strain>ZK / E33L</strain>
    </source>
</reference>
<dbReference type="EC" id="3.1.11.6" evidence="1"/>
<dbReference type="EMBL" id="CP000001">
    <property type="protein sequence ID" value="AAU16335.1"/>
    <property type="molecule type" value="Genomic_DNA"/>
</dbReference>
<dbReference type="RefSeq" id="WP_000428423.1">
    <property type="nucleotide sequence ID" value="NZ_CP009968.1"/>
</dbReference>
<dbReference type="SMR" id="Q635A5"/>
<dbReference type="GeneID" id="93006923"/>
<dbReference type="KEGG" id="bcz:BCE33L3932"/>
<dbReference type="PATRIC" id="fig|288681.22.peg.1465"/>
<dbReference type="Proteomes" id="UP000002612">
    <property type="component" value="Chromosome"/>
</dbReference>
<dbReference type="GO" id="GO:0005829">
    <property type="term" value="C:cytosol"/>
    <property type="evidence" value="ECO:0007669"/>
    <property type="project" value="TreeGrafter"/>
</dbReference>
<dbReference type="GO" id="GO:0009318">
    <property type="term" value="C:exodeoxyribonuclease VII complex"/>
    <property type="evidence" value="ECO:0007669"/>
    <property type="project" value="InterPro"/>
</dbReference>
<dbReference type="GO" id="GO:0008855">
    <property type="term" value="F:exodeoxyribonuclease VII activity"/>
    <property type="evidence" value="ECO:0007669"/>
    <property type="project" value="UniProtKB-UniRule"/>
</dbReference>
<dbReference type="GO" id="GO:0006308">
    <property type="term" value="P:DNA catabolic process"/>
    <property type="evidence" value="ECO:0007669"/>
    <property type="project" value="UniProtKB-UniRule"/>
</dbReference>
<dbReference type="FunFam" id="1.10.287.1040:FF:000002">
    <property type="entry name" value="Exodeoxyribonuclease 7 small subunit"/>
    <property type="match status" value="1"/>
</dbReference>
<dbReference type="Gene3D" id="1.10.287.1040">
    <property type="entry name" value="Exonuclease VII, small subunit"/>
    <property type="match status" value="1"/>
</dbReference>
<dbReference type="HAMAP" id="MF_00337">
    <property type="entry name" value="Exonuc_7_S"/>
    <property type="match status" value="1"/>
</dbReference>
<dbReference type="InterPro" id="IPR003761">
    <property type="entry name" value="Exonuc_VII_S"/>
</dbReference>
<dbReference type="InterPro" id="IPR037004">
    <property type="entry name" value="Exonuc_VII_ssu_sf"/>
</dbReference>
<dbReference type="NCBIfam" id="NF010666">
    <property type="entry name" value="PRK14063.1"/>
    <property type="match status" value="1"/>
</dbReference>
<dbReference type="NCBIfam" id="TIGR01280">
    <property type="entry name" value="xseB"/>
    <property type="match status" value="1"/>
</dbReference>
<dbReference type="PANTHER" id="PTHR34137">
    <property type="entry name" value="EXODEOXYRIBONUCLEASE 7 SMALL SUBUNIT"/>
    <property type="match status" value="1"/>
</dbReference>
<dbReference type="PANTHER" id="PTHR34137:SF1">
    <property type="entry name" value="EXODEOXYRIBONUCLEASE 7 SMALL SUBUNIT"/>
    <property type="match status" value="1"/>
</dbReference>
<dbReference type="Pfam" id="PF02609">
    <property type="entry name" value="Exonuc_VII_S"/>
    <property type="match status" value="1"/>
</dbReference>
<dbReference type="PIRSF" id="PIRSF006488">
    <property type="entry name" value="Exonuc_VII_S"/>
    <property type="match status" value="1"/>
</dbReference>
<dbReference type="SUPFAM" id="SSF116842">
    <property type="entry name" value="XseB-like"/>
    <property type="match status" value="1"/>
</dbReference>